<keyword id="KW-0012">Acyltransferase</keyword>
<keyword id="KW-0963">Cytoplasm</keyword>
<keyword id="KW-0441">Lipid A biosynthesis</keyword>
<keyword id="KW-0444">Lipid biosynthesis</keyword>
<keyword id="KW-0443">Lipid metabolism</keyword>
<keyword id="KW-0677">Repeat</keyword>
<keyword id="KW-0808">Transferase</keyword>
<evidence type="ECO:0000255" key="1">
    <source>
        <dbReference type="HAMAP-Rule" id="MF_00387"/>
    </source>
</evidence>
<protein>
    <recommendedName>
        <fullName evidence="1">Acyl-[acyl-carrier-protein]--UDP-N-acetylglucosamine O-acyltransferase</fullName>
        <shortName evidence="1">UDP-N-acetylglucosamine acyltransferase</shortName>
        <ecNumber evidence="1">2.3.1.129</ecNumber>
    </recommendedName>
</protein>
<dbReference type="EC" id="2.3.1.129" evidence="1"/>
<dbReference type="EMBL" id="AE006914">
    <property type="protein sequence ID" value="AAL02546.1"/>
    <property type="molecule type" value="Genomic_DNA"/>
</dbReference>
<dbReference type="PIR" id="H97700">
    <property type="entry name" value="H97700"/>
</dbReference>
<dbReference type="RefSeq" id="WP_010976696.1">
    <property type="nucleotide sequence ID" value="NC_003103.1"/>
</dbReference>
<dbReference type="SMR" id="Q92JQ9"/>
<dbReference type="GeneID" id="928658"/>
<dbReference type="KEGG" id="rco:RC0008"/>
<dbReference type="PATRIC" id="fig|272944.4.peg.7"/>
<dbReference type="HOGENOM" id="CLU_061249_0_0_5"/>
<dbReference type="UniPathway" id="UPA00359">
    <property type="reaction ID" value="UER00477"/>
</dbReference>
<dbReference type="Proteomes" id="UP000000816">
    <property type="component" value="Chromosome"/>
</dbReference>
<dbReference type="GO" id="GO:0005737">
    <property type="term" value="C:cytoplasm"/>
    <property type="evidence" value="ECO:0007669"/>
    <property type="project" value="UniProtKB-SubCell"/>
</dbReference>
<dbReference type="GO" id="GO:0016020">
    <property type="term" value="C:membrane"/>
    <property type="evidence" value="ECO:0007669"/>
    <property type="project" value="GOC"/>
</dbReference>
<dbReference type="GO" id="GO:0008780">
    <property type="term" value="F:acyl-[acyl-carrier-protein]-UDP-N-acetylglucosamine O-acyltransferase activity"/>
    <property type="evidence" value="ECO:0007669"/>
    <property type="project" value="UniProtKB-UniRule"/>
</dbReference>
<dbReference type="GO" id="GO:0009245">
    <property type="term" value="P:lipid A biosynthetic process"/>
    <property type="evidence" value="ECO:0007669"/>
    <property type="project" value="UniProtKB-UniRule"/>
</dbReference>
<dbReference type="CDD" id="cd03351">
    <property type="entry name" value="LbH_UDP-GlcNAc_AT"/>
    <property type="match status" value="1"/>
</dbReference>
<dbReference type="Gene3D" id="2.160.10.10">
    <property type="entry name" value="Hexapeptide repeat proteins"/>
    <property type="match status" value="1"/>
</dbReference>
<dbReference type="Gene3D" id="1.20.1180.10">
    <property type="entry name" value="Udp N-acetylglucosamine O-acyltransferase, C-terminal domain"/>
    <property type="match status" value="1"/>
</dbReference>
<dbReference type="HAMAP" id="MF_00387">
    <property type="entry name" value="LpxA"/>
    <property type="match status" value="1"/>
</dbReference>
<dbReference type="InterPro" id="IPR029098">
    <property type="entry name" value="Acetyltransf_C"/>
</dbReference>
<dbReference type="InterPro" id="IPR037157">
    <property type="entry name" value="Acetyltransf_C_sf"/>
</dbReference>
<dbReference type="InterPro" id="IPR001451">
    <property type="entry name" value="Hexapep"/>
</dbReference>
<dbReference type="InterPro" id="IPR018357">
    <property type="entry name" value="Hexapep_transf_CS"/>
</dbReference>
<dbReference type="InterPro" id="IPR010137">
    <property type="entry name" value="Lipid_A_LpxA"/>
</dbReference>
<dbReference type="InterPro" id="IPR011004">
    <property type="entry name" value="Trimer_LpxA-like_sf"/>
</dbReference>
<dbReference type="NCBIfam" id="TIGR01852">
    <property type="entry name" value="lipid_A_lpxA"/>
    <property type="match status" value="1"/>
</dbReference>
<dbReference type="NCBIfam" id="NF003657">
    <property type="entry name" value="PRK05289.1"/>
    <property type="match status" value="1"/>
</dbReference>
<dbReference type="PANTHER" id="PTHR43480">
    <property type="entry name" value="ACYL-[ACYL-CARRIER-PROTEIN]--UDP-N-ACETYLGLUCOSAMINE O-ACYLTRANSFERASE"/>
    <property type="match status" value="1"/>
</dbReference>
<dbReference type="PANTHER" id="PTHR43480:SF1">
    <property type="entry name" value="ACYL-[ACYL-CARRIER-PROTEIN]--UDP-N-ACETYLGLUCOSAMINE O-ACYLTRANSFERASE, MITOCHONDRIAL-RELATED"/>
    <property type="match status" value="1"/>
</dbReference>
<dbReference type="Pfam" id="PF13720">
    <property type="entry name" value="Acetyltransf_11"/>
    <property type="match status" value="1"/>
</dbReference>
<dbReference type="Pfam" id="PF00132">
    <property type="entry name" value="Hexapep"/>
    <property type="match status" value="2"/>
</dbReference>
<dbReference type="PIRSF" id="PIRSF000456">
    <property type="entry name" value="UDP-GlcNAc_acltr"/>
    <property type="match status" value="1"/>
</dbReference>
<dbReference type="SUPFAM" id="SSF51161">
    <property type="entry name" value="Trimeric LpxA-like enzymes"/>
    <property type="match status" value="1"/>
</dbReference>
<dbReference type="PROSITE" id="PS00101">
    <property type="entry name" value="HEXAPEP_TRANSFERASES"/>
    <property type="match status" value="1"/>
</dbReference>
<gene>
    <name evidence="1" type="primary">lpxA</name>
    <name type="ordered locus">RC0008</name>
</gene>
<feature type="chain" id="PRO_0000188064" description="Acyl-[acyl-carrier-protein]--UDP-N-acetylglucosamine O-acyltransferase">
    <location>
        <begin position="1"/>
        <end position="264"/>
    </location>
</feature>
<organism>
    <name type="scientific">Rickettsia conorii (strain ATCC VR-613 / Malish 7)</name>
    <dbReference type="NCBI Taxonomy" id="272944"/>
    <lineage>
        <taxon>Bacteria</taxon>
        <taxon>Pseudomonadati</taxon>
        <taxon>Pseudomonadota</taxon>
        <taxon>Alphaproteobacteria</taxon>
        <taxon>Rickettsiales</taxon>
        <taxon>Rickettsiaceae</taxon>
        <taxon>Rickettsieae</taxon>
        <taxon>Rickettsia</taxon>
        <taxon>spotted fever group</taxon>
    </lineage>
</organism>
<proteinExistence type="inferred from homology"/>
<comment type="function">
    <text evidence="1">Involved in the biosynthesis of lipid A, a phosphorylated glycolipid that anchors the lipopolysaccharide to the outer membrane of the cell.</text>
</comment>
<comment type="catalytic activity">
    <reaction evidence="1">
        <text>a (3R)-hydroxyacyl-[ACP] + UDP-N-acetyl-alpha-D-glucosamine = a UDP-3-O-[(3R)-3-hydroxyacyl]-N-acetyl-alpha-D-glucosamine + holo-[ACP]</text>
        <dbReference type="Rhea" id="RHEA:67812"/>
        <dbReference type="Rhea" id="RHEA-COMP:9685"/>
        <dbReference type="Rhea" id="RHEA-COMP:9945"/>
        <dbReference type="ChEBI" id="CHEBI:57705"/>
        <dbReference type="ChEBI" id="CHEBI:64479"/>
        <dbReference type="ChEBI" id="CHEBI:78827"/>
        <dbReference type="ChEBI" id="CHEBI:173225"/>
        <dbReference type="EC" id="2.3.1.129"/>
    </reaction>
</comment>
<comment type="pathway">
    <text evidence="1">Glycolipid biosynthesis; lipid IV(A) biosynthesis; lipid IV(A) from (3R)-3-hydroxytetradecanoyl-[acyl-carrier-protein] and UDP-N-acetyl-alpha-D-glucosamine: step 1/6.</text>
</comment>
<comment type="subunit">
    <text evidence="1">Homotrimer.</text>
</comment>
<comment type="subcellular location">
    <subcellularLocation>
        <location evidence="1">Cytoplasm</location>
    </subcellularLocation>
</comment>
<comment type="similarity">
    <text evidence="1">Belongs to the transferase hexapeptide repeat family. LpxA subfamily.</text>
</comment>
<reference key="1">
    <citation type="journal article" date="2001" name="Science">
        <title>Mechanisms of evolution in Rickettsia conorii and R. prowazekii.</title>
        <authorList>
            <person name="Ogata H."/>
            <person name="Audic S."/>
            <person name="Renesto-Audiffren P."/>
            <person name="Fournier P.-E."/>
            <person name="Barbe V."/>
            <person name="Samson D."/>
            <person name="Roux V."/>
            <person name="Cossart P."/>
            <person name="Weissenbach J."/>
            <person name="Claverie J.-M."/>
            <person name="Raoult D."/>
        </authorList>
    </citation>
    <scope>NUCLEOTIDE SEQUENCE [LARGE SCALE GENOMIC DNA]</scope>
    <source>
        <strain>ATCC VR-613 / Malish 7</strain>
    </source>
</reference>
<accession>Q92JQ9</accession>
<sequence length="264" mass="28513">MSNSNIHTTAVIAEGAKLGKNVKIGPYCIIGPEVVLHDNVELKSHVVIEGITEIGENTVIYPFASIGQPPQILKYANERSSTIIGSNNTIREYVTVQAGSQRGGMMTRVGNNNLFMVGVHIGHDCKIGNNVVFANYVSLAGHIGVGDYTIIGGLSAVHQYARIGEYSMIGGLSPVGADVIPFGLVSSKRAVLEGLNLIGMNRKGFDKVKSLSALKAIEEIFSGEGNFAERIKQVAEKYNNNSIVIQIIDFLNQDSNRAFCRFEK</sequence>
<name>LPXA_RICCN</name>